<sequence length="25" mass="2915">VATSEPNRYFNPYSYVELIITVDHS</sequence>
<accession>P0DJH5</accession>
<reference key="1">
    <citation type="journal article" date="2008" name="Biochimie">
        <title>P-III hemorrhagic metalloproteinases from Russell's viper venom: cloning, characterization, phylogenetic and functional site analyses.</title>
        <authorList>
            <person name="Chen H.-S."/>
            <person name="Tsai H.-Y."/>
            <person name="Wang Y.-M."/>
            <person name="Tsai I.-H."/>
        </authorList>
    </citation>
    <scope>PROTEIN SEQUENCE</scope>
    <scope>FUNCTION</scope>
    <scope>ACTIVITY REGULATION</scope>
    <scope>SUBUNIT</scope>
    <scope>MASS SPECTROMETRY</scope>
    <source>
        <strain>Myanmar</strain>
        <tissue>Venom</tissue>
    </source>
</reference>
<keyword id="KW-0106">Calcium</keyword>
<keyword id="KW-0903">Direct protein sequencing</keyword>
<keyword id="KW-1015">Disulfide bond</keyword>
<keyword id="KW-1206">Fibrinogenolytic toxin</keyword>
<keyword id="KW-0325">Glycoprotein</keyword>
<keyword id="KW-1200">Hemorrhagic toxin</keyword>
<keyword id="KW-1199">Hemostasis impairing toxin</keyword>
<keyword id="KW-0378">Hydrolase</keyword>
<keyword id="KW-0479">Metal-binding</keyword>
<keyword id="KW-0482">Metalloprotease</keyword>
<keyword id="KW-0645">Protease</keyword>
<keyword id="KW-0964">Secreted</keyword>
<keyword id="KW-0800">Toxin</keyword>
<keyword id="KW-0862">Zinc</keyword>
<keyword id="KW-0865">Zymogen</keyword>
<organism>
    <name type="scientific">Daboia siamensis</name>
    <name type="common">Eastern Russel's viper</name>
    <name type="synonym">Daboia russelii siamensis</name>
    <dbReference type="NCBI Taxonomy" id="343250"/>
    <lineage>
        <taxon>Eukaryota</taxon>
        <taxon>Metazoa</taxon>
        <taxon>Chordata</taxon>
        <taxon>Craniata</taxon>
        <taxon>Vertebrata</taxon>
        <taxon>Euteleostomi</taxon>
        <taxon>Lepidosauria</taxon>
        <taxon>Squamata</taxon>
        <taxon>Bifurcata</taxon>
        <taxon>Unidentata</taxon>
        <taxon>Episquamata</taxon>
        <taxon>Toxicofera</taxon>
        <taxon>Serpentes</taxon>
        <taxon>Colubroidea</taxon>
        <taxon>Viperidae</taxon>
        <taxon>Viperinae</taxon>
        <taxon>Daboia</taxon>
    </lineage>
</organism>
<comment type="function">
    <text evidence="3">Snake venom zinc metalloprotease that possesses high hemorrhagic activity (minimum hemorrhagic dose, MHD=0.86 ug) when subcutaneously injected into mice. Has potent fibrinogenolytic activity on alpha-chain of fibrinogen (FGA). Hydrolyzes model substrate (beta-chain of insulin) at Ala(14)-Leu(15) and Tyr(16)-Leu(17) followed by His(10)-Leu(11) and Phe(24)-Phe(25).</text>
</comment>
<comment type="cofactor">
    <cofactor evidence="1">
        <name>Zn(2+)</name>
        <dbReference type="ChEBI" id="CHEBI:29105"/>
    </cofactor>
    <text evidence="1">Binds 1 zinc ion per subunit.</text>
</comment>
<comment type="activity regulation">
    <text evidence="3">Inhibited by EDTA, EGTA and 1,10-phenanthroline. Addition of Mg(2+) or Ca(2+) increases the casein hydrolysis rate.</text>
</comment>
<comment type="biophysicochemical properties">
    <kinetics>
        <KM>7 uM for NFF-2 (fluorogenic substrates with cleavage at Ala-Nva)</KM>
    </kinetics>
</comment>
<comment type="subunit">
    <text evidence="3">Monomer.</text>
</comment>
<comment type="subcellular location">
    <subcellularLocation>
        <location evidence="1">Secreted</location>
    </subcellularLocation>
</comment>
<comment type="tissue specificity">
    <text>Expressed by the venom gland.</text>
</comment>
<comment type="PTM">
    <text>N-glycosylated.</text>
</comment>
<comment type="PTM">
    <text evidence="1">Contains 16 disulfide bonds.</text>
</comment>
<comment type="mass spectrometry" mass="65065.0" method="MALDI" evidence="3"/>
<comment type="miscellaneous">
    <text>Negative results: does not degrade beta- and gamma-chains of fibrinogen.</text>
</comment>
<comment type="similarity">
    <text evidence="4">Belongs to the venom metalloproteinase (M12B) family. P-III subfamily. P-IIIa sub-subfamily.</text>
</comment>
<name>VM3DM_DABSI</name>
<protein>
    <recommendedName>
        <fullName>Zinc metalloproteinase-disintegrin-like daborhagin-M</fullName>
        <ecNumber>3.4.24.-</ecNumber>
    </recommendedName>
    <alternativeName>
        <fullName>Snake venom metalloproteinase</fullName>
        <shortName>SVMP</shortName>
    </alternativeName>
</protein>
<feature type="chain" id="PRO_0000417328" description="Zinc metalloproteinase-disintegrin-like daborhagin-M">
    <location>
        <begin position="1"/>
        <end position="25" status="greater than"/>
    </location>
</feature>
<feature type="domain" description="Peptidase M12B" evidence="2">
    <location>
        <begin position="14"/>
        <end position="25" status="greater than"/>
    </location>
</feature>
<feature type="binding site" evidence="1">
    <location>
        <position position="17"/>
    </location>
    <ligand>
        <name>Ca(2+)</name>
        <dbReference type="ChEBI" id="CHEBI:29108"/>
    </ligand>
</feature>
<feature type="non-terminal residue">
    <location>
        <position position="25"/>
    </location>
</feature>
<evidence type="ECO:0000250" key="1"/>
<evidence type="ECO:0000255" key="2">
    <source>
        <dbReference type="PROSITE-ProRule" id="PRU00276"/>
    </source>
</evidence>
<evidence type="ECO:0000269" key="3">
    <source>
    </source>
</evidence>
<evidence type="ECO:0000305" key="4"/>
<dbReference type="EC" id="3.4.24.-"/>
<dbReference type="GO" id="GO:0005576">
    <property type="term" value="C:extracellular region"/>
    <property type="evidence" value="ECO:0007669"/>
    <property type="project" value="UniProtKB-SubCell"/>
</dbReference>
<dbReference type="GO" id="GO:0046872">
    <property type="term" value="F:metal ion binding"/>
    <property type="evidence" value="ECO:0007669"/>
    <property type="project" value="UniProtKB-KW"/>
</dbReference>
<dbReference type="GO" id="GO:0008237">
    <property type="term" value="F:metallopeptidase activity"/>
    <property type="evidence" value="ECO:0007669"/>
    <property type="project" value="UniProtKB-KW"/>
</dbReference>
<dbReference type="GO" id="GO:0090729">
    <property type="term" value="F:toxin activity"/>
    <property type="evidence" value="ECO:0007669"/>
    <property type="project" value="UniProtKB-KW"/>
</dbReference>
<dbReference type="GO" id="GO:0006508">
    <property type="term" value="P:proteolysis"/>
    <property type="evidence" value="ECO:0007669"/>
    <property type="project" value="UniProtKB-KW"/>
</dbReference>
<proteinExistence type="evidence at protein level"/>